<accession>Q30KQ6</accession>
<accession>Q8NES9</accession>
<sequence>MRIFYYLHFLCYVTFILPATCTLVNADRCTKRYGRCKRDCLESEKQIDICSLPRKICCTEKLYEEDDMF</sequence>
<gene>
    <name type="primary">DEFB114</name>
    <name type="synonym">DEFB14</name>
</gene>
<proteinExistence type="evidence at protein level"/>
<comment type="function">
    <text evidence="3">Has a salt-sensitive antimicrobial activity against Gram-negative bacteria, including E.coli, Gram-positive, including S.aureus, and fungi, including C.albicans. Binds to and neutralizes bacterial lipopolysaccharides (LPS), abolishing TNF production by macrophages challenged with LPS. Rescues the LPS-induced reduction of sperm motility in vitro and may protect from LPS-induced lethality.</text>
</comment>
<comment type="subcellular location">
    <subcellularLocation>
        <location evidence="1">Secreted</location>
    </subcellularLocation>
</comment>
<comment type="tissue specificity">
    <text evidence="3">Expressed in epididymis, predominantly in the caput (at protein level).</text>
</comment>
<comment type="similarity">
    <text evidence="4">Belongs to the beta-defensin family.</text>
</comment>
<organism>
    <name type="scientific">Homo sapiens</name>
    <name type="common">Human</name>
    <dbReference type="NCBI Taxonomy" id="9606"/>
    <lineage>
        <taxon>Eukaryota</taxon>
        <taxon>Metazoa</taxon>
        <taxon>Chordata</taxon>
        <taxon>Craniata</taxon>
        <taxon>Vertebrata</taxon>
        <taxon>Euteleostomi</taxon>
        <taxon>Mammalia</taxon>
        <taxon>Eutheria</taxon>
        <taxon>Euarchontoglires</taxon>
        <taxon>Primates</taxon>
        <taxon>Haplorrhini</taxon>
        <taxon>Catarrhini</taxon>
        <taxon>Hominidae</taxon>
        <taxon>Homo</taxon>
    </lineage>
</organism>
<feature type="signal peptide" evidence="2">
    <location>
        <begin position="1"/>
        <end position="26"/>
    </location>
</feature>
<feature type="chain" id="PRO_0000045342" description="Beta-defensin 114">
    <location>
        <begin position="27"/>
        <end position="69"/>
    </location>
</feature>
<feature type="disulfide bond" evidence="1">
    <location>
        <begin position="29"/>
        <end position="57"/>
    </location>
</feature>
<feature type="disulfide bond" evidence="1">
    <location>
        <begin position="36"/>
        <end position="50"/>
    </location>
</feature>
<feature type="disulfide bond" evidence="1">
    <location>
        <begin position="40"/>
        <end position="58"/>
    </location>
</feature>
<feature type="sequence conflict" description="In Ref. 2; AAM93912." evidence="4" ref="2">
    <original>R</original>
    <variation>G</variation>
    <location>
        <position position="54"/>
    </location>
</feature>
<dbReference type="EMBL" id="DQ012018">
    <property type="protein sequence ID" value="AAY59754.1"/>
    <property type="molecule type" value="mRNA"/>
</dbReference>
<dbReference type="EMBL" id="AY122470">
    <property type="protein sequence ID" value="AAM93912.1"/>
    <property type="molecule type" value="mRNA"/>
</dbReference>
<dbReference type="CCDS" id="CCDS34474.1"/>
<dbReference type="RefSeq" id="NP_001032588.1">
    <property type="nucleotide sequence ID" value="NM_001037499.2"/>
</dbReference>
<dbReference type="SMR" id="Q30KQ6"/>
<dbReference type="BioGRID" id="128842">
    <property type="interactions" value="9"/>
</dbReference>
<dbReference type="FunCoup" id="Q30KQ6">
    <property type="interactions" value="20"/>
</dbReference>
<dbReference type="IntAct" id="Q30KQ6">
    <property type="interactions" value="2"/>
</dbReference>
<dbReference type="STRING" id="9606.ENSP00000312702"/>
<dbReference type="BioMuta" id="DEFB114"/>
<dbReference type="DMDM" id="85540943"/>
<dbReference type="PaxDb" id="9606-ENSP00000312702"/>
<dbReference type="Antibodypedia" id="64299">
    <property type="antibodies" value="4 antibodies from 4 providers"/>
</dbReference>
<dbReference type="DNASU" id="245928"/>
<dbReference type="Ensembl" id="ENST00000322066.4">
    <property type="protein sequence ID" value="ENSP00000312702.3"/>
    <property type="gene ID" value="ENSG00000177684.4"/>
</dbReference>
<dbReference type="GeneID" id="245928"/>
<dbReference type="KEGG" id="hsa:245928"/>
<dbReference type="MANE-Select" id="ENST00000322066.4">
    <property type="protein sequence ID" value="ENSP00000312702.3"/>
    <property type="RefSeq nucleotide sequence ID" value="NM_001037499.2"/>
    <property type="RefSeq protein sequence ID" value="NP_001032588.1"/>
</dbReference>
<dbReference type="UCSC" id="uc011dwp.3">
    <property type="organism name" value="human"/>
</dbReference>
<dbReference type="AGR" id="HGNC:18095"/>
<dbReference type="CTD" id="245928"/>
<dbReference type="DisGeNET" id="245928"/>
<dbReference type="GeneCards" id="DEFB114"/>
<dbReference type="HGNC" id="HGNC:18095">
    <property type="gene designation" value="DEFB114"/>
</dbReference>
<dbReference type="HPA" id="ENSG00000177684">
    <property type="expression patterns" value="Tissue enriched (epididymis)"/>
</dbReference>
<dbReference type="MIM" id="615243">
    <property type="type" value="gene"/>
</dbReference>
<dbReference type="neXtProt" id="NX_Q30KQ6"/>
<dbReference type="OpenTargets" id="ENSG00000177684"/>
<dbReference type="PharmGKB" id="PA38491"/>
<dbReference type="VEuPathDB" id="HostDB:ENSG00000177684"/>
<dbReference type="eggNOG" id="ENOG502RVKZ">
    <property type="taxonomic scope" value="Eukaryota"/>
</dbReference>
<dbReference type="GeneTree" id="ENSGT00390000016155"/>
<dbReference type="HOGENOM" id="CLU_205440_0_0_1"/>
<dbReference type="InParanoid" id="Q30KQ6"/>
<dbReference type="OMA" id="LHFLCYV"/>
<dbReference type="OrthoDB" id="9835764at2759"/>
<dbReference type="PAN-GO" id="Q30KQ6">
    <property type="GO annotations" value="2 GO annotations based on evolutionary models"/>
</dbReference>
<dbReference type="PhylomeDB" id="Q30KQ6"/>
<dbReference type="TreeFam" id="TF341328"/>
<dbReference type="PathwayCommons" id="Q30KQ6"/>
<dbReference type="Reactome" id="R-HSA-1461957">
    <property type="pathway name" value="Beta defensins"/>
</dbReference>
<dbReference type="Reactome" id="R-HSA-1461973">
    <property type="pathway name" value="Defensins"/>
</dbReference>
<dbReference type="BioGRID-ORCS" id="245928">
    <property type="hits" value="60 hits in 1090 CRISPR screens"/>
</dbReference>
<dbReference type="GenomeRNAi" id="245928"/>
<dbReference type="Pharos" id="Q30KQ6">
    <property type="development level" value="Tbio"/>
</dbReference>
<dbReference type="PRO" id="PR:Q30KQ6"/>
<dbReference type="Proteomes" id="UP000005640">
    <property type="component" value="Chromosome 6"/>
</dbReference>
<dbReference type="RNAct" id="Q30KQ6">
    <property type="molecule type" value="protein"/>
</dbReference>
<dbReference type="Bgee" id="ENSG00000177684">
    <property type="expression patterns" value="Expressed in male germ line stem cell (sensu Vertebrata) in testis and 8 other cell types or tissues"/>
</dbReference>
<dbReference type="GO" id="GO:0005615">
    <property type="term" value="C:extracellular space"/>
    <property type="evidence" value="ECO:0000318"/>
    <property type="project" value="GO_Central"/>
</dbReference>
<dbReference type="GO" id="GO:0031731">
    <property type="term" value="F:CCR6 chemokine receptor binding"/>
    <property type="evidence" value="ECO:0000318"/>
    <property type="project" value="GO_Central"/>
</dbReference>
<dbReference type="GO" id="GO:0042056">
    <property type="term" value="F:chemoattractant activity"/>
    <property type="evidence" value="ECO:0000318"/>
    <property type="project" value="GO_Central"/>
</dbReference>
<dbReference type="GO" id="GO:0001530">
    <property type="term" value="F:lipopolysaccharide binding"/>
    <property type="evidence" value="ECO:0000314"/>
    <property type="project" value="UniProtKB"/>
</dbReference>
<dbReference type="GO" id="GO:0061760">
    <property type="term" value="P:antifungal innate immune response"/>
    <property type="evidence" value="ECO:0000315"/>
    <property type="project" value="UniProtKB"/>
</dbReference>
<dbReference type="GO" id="GO:0060326">
    <property type="term" value="P:cell chemotaxis"/>
    <property type="evidence" value="ECO:0000318"/>
    <property type="project" value="GO_Central"/>
</dbReference>
<dbReference type="GO" id="GO:0042742">
    <property type="term" value="P:defense response to bacterium"/>
    <property type="evidence" value="ECO:0000318"/>
    <property type="project" value="GO_Central"/>
</dbReference>
<dbReference type="GO" id="GO:0050829">
    <property type="term" value="P:defense response to Gram-negative bacterium"/>
    <property type="evidence" value="ECO:0000315"/>
    <property type="project" value="UniProtKB"/>
</dbReference>
<dbReference type="GO" id="GO:0050830">
    <property type="term" value="P:defense response to Gram-positive bacterium"/>
    <property type="evidence" value="ECO:0000315"/>
    <property type="project" value="UniProtKB"/>
</dbReference>
<dbReference type="GO" id="GO:0045087">
    <property type="term" value="P:innate immune response"/>
    <property type="evidence" value="ECO:0000315"/>
    <property type="project" value="UniProtKB"/>
</dbReference>
<dbReference type="GO" id="GO:0031665">
    <property type="term" value="P:negative regulation of lipopolysaccharide-mediated signaling pathway"/>
    <property type="evidence" value="ECO:0000314"/>
    <property type="project" value="UniProtKB"/>
</dbReference>
<dbReference type="GO" id="GO:0043407">
    <property type="term" value="P:negative regulation of MAP kinase activity"/>
    <property type="evidence" value="ECO:0000315"/>
    <property type="project" value="UniProtKB"/>
</dbReference>
<dbReference type="GO" id="GO:0032720">
    <property type="term" value="P:negative regulation of tumor necrosis factor production"/>
    <property type="evidence" value="ECO:0000315"/>
    <property type="project" value="UniProtKB"/>
</dbReference>
<dbReference type="GO" id="GO:0050729">
    <property type="term" value="P:positive regulation of inflammatory response"/>
    <property type="evidence" value="ECO:0000315"/>
    <property type="project" value="UniProtKB"/>
</dbReference>
<dbReference type="InterPro" id="IPR025933">
    <property type="entry name" value="Beta_defensin_dom"/>
</dbReference>
<dbReference type="PANTHER" id="PTHR20515">
    <property type="entry name" value="BETA-DEFENSIN"/>
    <property type="match status" value="1"/>
</dbReference>
<dbReference type="PANTHER" id="PTHR20515:SF16">
    <property type="entry name" value="BETA-DEFENSIN 114"/>
    <property type="match status" value="1"/>
</dbReference>
<dbReference type="Pfam" id="PF13841">
    <property type="entry name" value="Defensin_beta_2"/>
    <property type="match status" value="1"/>
</dbReference>
<protein>
    <recommendedName>
        <fullName>Beta-defensin 114</fullName>
    </recommendedName>
    <alternativeName>
        <fullName>Beta-defensin 14</fullName>
        <shortName>DEFB-14</shortName>
    </alternativeName>
    <alternativeName>
        <fullName>Defensin, beta 114</fullName>
    </alternativeName>
</protein>
<name>DB114_HUMAN</name>
<reference key="1">
    <citation type="journal article" date="2005" name="Physiol. Genomics">
        <title>Cross-species analysis of the mammalian beta-defensin gene family: presence of syntenic gene clusters and preferential expression in the male reproductive tract.</title>
        <authorList>
            <person name="Patil A.A."/>
            <person name="Cai Y."/>
            <person name="Sang Y."/>
            <person name="Blecha F."/>
            <person name="Zhang G."/>
        </authorList>
    </citation>
    <scope>NUCLEOTIDE SEQUENCE [MRNA]</scope>
</reference>
<reference key="2">
    <citation type="journal article" date="2002" name="Proc. Natl. Acad. Sci. U.S.A.">
        <title>Discovery of five conserved beta-defensin gene clusters using a computational search strategy.</title>
        <authorList>
            <person name="Schutte B.C."/>
            <person name="Mitros J.P."/>
            <person name="Bartlett J.A."/>
            <person name="Walters J.D."/>
            <person name="Jia H.P."/>
            <person name="Welsh M.J."/>
            <person name="Casavant T.L."/>
            <person name="McCray P.B. Jr."/>
        </authorList>
    </citation>
    <scope>NUCLEOTIDE SEQUENCE [MRNA] OF 31-69</scope>
</reference>
<reference key="3">
    <citation type="journal article" date="2013" name="J. Biol. Chem.">
        <title>The novel human beta-defensin 114 regulates lipopolysaccharide (LPS)-mediated inflammation and protects sperm from motility loss.</title>
        <authorList>
            <person name="Yu H."/>
            <person name="Dong J."/>
            <person name="Gu Y."/>
            <person name="Liu H."/>
            <person name="Xin A."/>
            <person name="Shi H."/>
            <person name="Sun F."/>
            <person name="Zhang Y."/>
            <person name="Lin D."/>
            <person name="Diao H."/>
        </authorList>
    </citation>
    <scope>FUNCTION</scope>
    <scope>TISSUE SPECIFICITY</scope>
</reference>
<evidence type="ECO:0000250" key="1"/>
<evidence type="ECO:0000255" key="2"/>
<evidence type="ECO:0000269" key="3">
    <source>
    </source>
</evidence>
<evidence type="ECO:0000305" key="4"/>
<keyword id="KW-0044">Antibiotic</keyword>
<keyword id="KW-0929">Antimicrobial</keyword>
<keyword id="KW-0211">Defensin</keyword>
<keyword id="KW-1015">Disulfide bond</keyword>
<keyword id="KW-1185">Reference proteome</keyword>
<keyword id="KW-0964">Secreted</keyword>
<keyword id="KW-0732">Signal</keyword>